<feature type="transit peptide" description="Mitochondrion" evidence="6">
    <location>
        <begin position="1"/>
        <end position="40"/>
    </location>
</feature>
<feature type="chain" id="PRO_0000020433" description="2-oxoglutarate dehydrogenase complex component E1">
    <location>
        <begin position="41"/>
        <end position="1023"/>
    </location>
</feature>
<feature type="binding site" evidence="1">
    <location>
        <position position="143"/>
    </location>
    <ligand>
        <name>Ca(2+)</name>
        <dbReference type="ChEBI" id="CHEBI:29108"/>
    </ligand>
</feature>
<feature type="binding site" evidence="1">
    <location>
        <position position="156"/>
    </location>
    <ligand>
        <name>Ca(2+)</name>
        <dbReference type="ChEBI" id="CHEBI:29108"/>
    </ligand>
</feature>
<feature type="binding site" evidence="1">
    <location>
        <position position="158"/>
    </location>
    <ligand>
        <name>Ca(2+)</name>
        <dbReference type="ChEBI" id="CHEBI:29108"/>
    </ligand>
</feature>
<feature type="binding site" evidence="1">
    <location>
        <position position="312"/>
    </location>
    <ligand>
        <name>thiamine diphosphate</name>
        <dbReference type="ChEBI" id="CHEBI:58937"/>
    </ligand>
</feature>
<feature type="binding site" evidence="1">
    <location>
        <position position="411"/>
    </location>
    <ligand>
        <name>Mg(2+)</name>
        <dbReference type="ChEBI" id="CHEBI:18420"/>
    </ligand>
</feature>
<feature type="binding site" evidence="1">
    <location>
        <position position="411"/>
    </location>
    <ligand>
        <name>thiamine diphosphate</name>
        <dbReference type="ChEBI" id="CHEBI:58937"/>
    </ligand>
</feature>
<feature type="binding site" evidence="1">
    <location>
        <position position="444"/>
    </location>
    <ligand>
        <name>Mg(2+)</name>
        <dbReference type="ChEBI" id="CHEBI:18420"/>
    </ligand>
</feature>
<feature type="binding site" evidence="1">
    <location>
        <position position="444"/>
    </location>
    <ligand>
        <name>thiamine diphosphate</name>
        <dbReference type="ChEBI" id="CHEBI:58937"/>
    </ligand>
</feature>
<feature type="binding site" evidence="1">
    <location>
        <position position="446"/>
    </location>
    <ligand>
        <name>Mg(2+)</name>
        <dbReference type="ChEBI" id="CHEBI:18420"/>
    </ligand>
</feature>
<feature type="binding site" evidence="1">
    <location>
        <position position="446"/>
    </location>
    <ligand>
        <name>thiamine diphosphate</name>
        <dbReference type="ChEBI" id="CHEBI:58937"/>
    </ligand>
</feature>
<feature type="binding site" evidence="1">
    <location>
        <position position="676"/>
    </location>
    <ligand>
        <name>thiamine diphosphate</name>
        <dbReference type="ChEBI" id="CHEBI:58937"/>
    </ligand>
</feature>
<feature type="modified residue" description="N6-succinyllysine" evidence="4">
    <location>
        <position position="74"/>
    </location>
</feature>
<feature type="modified residue" description="Phosphoserine" evidence="4">
    <location>
        <position position="100"/>
    </location>
</feature>
<feature type="modified residue" description="N6-acetyllysine" evidence="4">
    <location>
        <position position="401"/>
    </location>
</feature>
<feature type="modified residue" description="N6-succinyllysine" evidence="4">
    <location>
        <position position="564"/>
    </location>
</feature>
<feature type="modified residue" description="N6-acetyllysine" evidence="1">
    <location>
        <position position="970"/>
    </location>
</feature>
<feature type="cross-link" description="Glycyl lysine isopeptide (Lys-Gly) (interchain with G-Cter in ubiquitin)" evidence="1">
    <location>
        <position position="534"/>
    </location>
</feature>
<reference key="1">
    <citation type="submission" date="2003-10" db="EMBL/GenBank/DDBJ databases">
        <title>Isolation and characterization of cDNA for macaque neurological disease genes.</title>
        <authorList>
            <person name="Kusuda J."/>
            <person name="Osada N."/>
            <person name="Tanuma R."/>
            <person name="Hirata M."/>
            <person name="Sugano S."/>
            <person name="Hashimoto K."/>
        </authorList>
    </citation>
    <scope>NUCLEOTIDE SEQUENCE [LARGE SCALE MRNA]</scope>
    <source>
        <tissue>Brain cortex</tissue>
    </source>
</reference>
<protein>
    <recommendedName>
        <fullName evidence="1">2-oxoglutarate dehydrogenase complex component E1</fullName>
        <shortName>E1o</shortName>
        <shortName>OGDC-E1</shortName>
        <shortName>OGDH-E1</shortName>
        <ecNumber evidence="1">1.2.4.2</ecNumber>
    </recommendedName>
    <alternativeName>
        <fullName>2-oxoglutarate dehydrogenase, mitochondrial</fullName>
    </alternativeName>
    <alternativeName>
        <fullName>Alpha-ketoglutarate dehydrogenase</fullName>
        <shortName>Alpha-KGDH-E1</shortName>
    </alternativeName>
    <alternativeName>
        <fullName>Thiamine diphosphate (ThDP)-dependent 2-oxoglutarate dehydrogenase</fullName>
    </alternativeName>
</protein>
<organism>
    <name type="scientific">Macaca fascicularis</name>
    <name type="common">Crab-eating macaque</name>
    <name type="synonym">Cynomolgus monkey</name>
    <dbReference type="NCBI Taxonomy" id="9541"/>
    <lineage>
        <taxon>Eukaryota</taxon>
        <taxon>Metazoa</taxon>
        <taxon>Chordata</taxon>
        <taxon>Craniata</taxon>
        <taxon>Vertebrata</taxon>
        <taxon>Euteleostomi</taxon>
        <taxon>Mammalia</taxon>
        <taxon>Eutheria</taxon>
        <taxon>Euarchontoglires</taxon>
        <taxon>Primates</taxon>
        <taxon>Haplorrhini</taxon>
        <taxon>Catarrhini</taxon>
        <taxon>Cercopithecidae</taxon>
        <taxon>Cercopithecinae</taxon>
        <taxon>Macaca</taxon>
    </lineage>
</organism>
<dbReference type="EC" id="1.2.4.2" evidence="1"/>
<dbReference type="EMBL" id="AB125185">
    <property type="protein sequence ID" value="BAD51973.1"/>
    <property type="molecule type" value="mRNA"/>
</dbReference>
<dbReference type="SMR" id="Q60HE2"/>
<dbReference type="STRING" id="9541.ENSMFAP00000029899"/>
<dbReference type="eggNOG" id="KOG0450">
    <property type="taxonomic scope" value="Eukaryota"/>
</dbReference>
<dbReference type="OrthoDB" id="413077at2759"/>
<dbReference type="Proteomes" id="UP000233100">
    <property type="component" value="Unplaced"/>
</dbReference>
<dbReference type="GO" id="GO:0005759">
    <property type="term" value="C:mitochondrial matrix"/>
    <property type="evidence" value="ECO:0007669"/>
    <property type="project" value="UniProtKB-ARBA"/>
</dbReference>
<dbReference type="GO" id="GO:0031966">
    <property type="term" value="C:mitochondrial membrane"/>
    <property type="evidence" value="ECO:0000250"/>
    <property type="project" value="UniProtKB"/>
</dbReference>
<dbReference type="GO" id="GO:0005739">
    <property type="term" value="C:mitochondrion"/>
    <property type="evidence" value="ECO:0000250"/>
    <property type="project" value="UniProtKB"/>
</dbReference>
<dbReference type="GO" id="GO:0005634">
    <property type="term" value="C:nucleus"/>
    <property type="evidence" value="ECO:0000250"/>
    <property type="project" value="UniProtKB"/>
</dbReference>
<dbReference type="GO" id="GO:0045252">
    <property type="term" value="C:oxoglutarate dehydrogenase complex"/>
    <property type="evidence" value="ECO:0000250"/>
    <property type="project" value="UniProtKB"/>
</dbReference>
<dbReference type="GO" id="GO:0046872">
    <property type="term" value="F:metal ion binding"/>
    <property type="evidence" value="ECO:0007669"/>
    <property type="project" value="UniProtKB-KW"/>
</dbReference>
<dbReference type="GO" id="GO:0004591">
    <property type="term" value="F:oxoglutarate dehydrogenase (succinyl-transferring) activity"/>
    <property type="evidence" value="ECO:0000250"/>
    <property type="project" value="UniProtKB"/>
</dbReference>
<dbReference type="GO" id="GO:0030976">
    <property type="term" value="F:thiamine pyrophosphate binding"/>
    <property type="evidence" value="ECO:0000250"/>
    <property type="project" value="UniProtKB"/>
</dbReference>
<dbReference type="GO" id="GO:0006103">
    <property type="term" value="P:2-oxoglutarate metabolic process"/>
    <property type="evidence" value="ECO:0000250"/>
    <property type="project" value="UniProtKB"/>
</dbReference>
<dbReference type="GO" id="GO:0006091">
    <property type="term" value="P:generation of precursor metabolites and energy"/>
    <property type="evidence" value="ECO:0000250"/>
    <property type="project" value="UniProtKB"/>
</dbReference>
<dbReference type="GO" id="GO:0006096">
    <property type="term" value="P:glycolytic process"/>
    <property type="evidence" value="ECO:0007669"/>
    <property type="project" value="UniProtKB-KW"/>
</dbReference>
<dbReference type="GO" id="GO:0006104">
    <property type="term" value="P:succinyl-CoA metabolic process"/>
    <property type="evidence" value="ECO:0000250"/>
    <property type="project" value="UniProtKB"/>
</dbReference>
<dbReference type="GO" id="GO:0006099">
    <property type="term" value="P:tricarboxylic acid cycle"/>
    <property type="evidence" value="ECO:0007669"/>
    <property type="project" value="TreeGrafter"/>
</dbReference>
<dbReference type="CDD" id="cd02016">
    <property type="entry name" value="TPP_E1_OGDC_like"/>
    <property type="match status" value="1"/>
</dbReference>
<dbReference type="FunFam" id="3.40.50.12470:FF:000007">
    <property type="entry name" value="2-oxoglutarate dehydrogenase e1 mitochondrial"/>
    <property type="match status" value="1"/>
</dbReference>
<dbReference type="FunFam" id="3.40.50.970:FF:000002">
    <property type="entry name" value="2-oxoglutarate dehydrogenase, E1 component"/>
    <property type="match status" value="1"/>
</dbReference>
<dbReference type="FunFam" id="1.10.287.1150:FF:000001">
    <property type="entry name" value="2-oxoglutarate dehydrogenase, mitochondrial isoform X1"/>
    <property type="match status" value="1"/>
</dbReference>
<dbReference type="FunFam" id="3.40.50.11610:FF:000008">
    <property type="entry name" value="2-oxoglutarate dehydrogenase, mitochondrial isoform X4"/>
    <property type="match status" value="1"/>
</dbReference>
<dbReference type="Gene3D" id="3.40.50.12470">
    <property type="match status" value="1"/>
</dbReference>
<dbReference type="Gene3D" id="3.40.50.970">
    <property type="match status" value="1"/>
</dbReference>
<dbReference type="Gene3D" id="3.40.50.11610">
    <property type="entry name" value="Multifunctional 2-oxoglutarate metabolism enzyme, C-terminal domain"/>
    <property type="match status" value="1"/>
</dbReference>
<dbReference type="Gene3D" id="1.10.287.1150">
    <property type="entry name" value="TPP helical domain"/>
    <property type="match status" value="1"/>
</dbReference>
<dbReference type="InterPro" id="IPR032106">
    <property type="entry name" value="2-oxogl_dehyd_N"/>
</dbReference>
<dbReference type="InterPro" id="IPR011603">
    <property type="entry name" value="2oxoglutarate_DH_E1"/>
</dbReference>
<dbReference type="InterPro" id="IPR001017">
    <property type="entry name" value="DH_E1"/>
</dbReference>
<dbReference type="InterPro" id="IPR042179">
    <property type="entry name" value="KGD_C_sf"/>
</dbReference>
<dbReference type="InterPro" id="IPR031717">
    <property type="entry name" value="ODO-1/KGD_C"/>
</dbReference>
<dbReference type="InterPro" id="IPR029061">
    <property type="entry name" value="THDP-binding"/>
</dbReference>
<dbReference type="InterPro" id="IPR005475">
    <property type="entry name" value="Transketolase-like_Pyr-bd"/>
</dbReference>
<dbReference type="NCBIfam" id="TIGR00239">
    <property type="entry name" value="2oxo_dh_E1"/>
    <property type="match status" value="1"/>
</dbReference>
<dbReference type="NCBIfam" id="NF006914">
    <property type="entry name" value="PRK09404.1"/>
    <property type="match status" value="1"/>
</dbReference>
<dbReference type="NCBIfam" id="NF008907">
    <property type="entry name" value="PRK12270.1"/>
    <property type="match status" value="1"/>
</dbReference>
<dbReference type="PANTHER" id="PTHR23152">
    <property type="entry name" value="2-OXOGLUTARATE DEHYDROGENASE"/>
    <property type="match status" value="1"/>
</dbReference>
<dbReference type="PANTHER" id="PTHR23152:SF7">
    <property type="entry name" value="2-OXOGLUTARATE DEHYDROGENASE COMPLEX COMPONENT E1"/>
    <property type="match status" value="1"/>
</dbReference>
<dbReference type="Pfam" id="PF16078">
    <property type="entry name" value="2-oxogl_dehyd_N"/>
    <property type="match status" value="1"/>
</dbReference>
<dbReference type="Pfam" id="PF00676">
    <property type="entry name" value="E1_dh"/>
    <property type="match status" value="1"/>
</dbReference>
<dbReference type="Pfam" id="PF16870">
    <property type="entry name" value="OxoGdeHyase_C"/>
    <property type="match status" value="1"/>
</dbReference>
<dbReference type="Pfam" id="PF02779">
    <property type="entry name" value="Transket_pyr"/>
    <property type="match status" value="1"/>
</dbReference>
<dbReference type="PIRSF" id="PIRSF000157">
    <property type="entry name" value="Oxoglu_dh_E1"/>
    <property type="match status" value="1"/>
</dbReference>
<dbReference type="SMART" id="SM00861">
    <property type="entry name" value="Transket_pyr"/>
    <property type="match status" value="1"/>
</dbReference>
<dbReference type="SUPFAM" id="SSF52518">
    <property type="entry name" value="Thiamin diphosphate-binding fold (THDP-binding)"/>
    <property type="match status" value="2"/>
</dbReference>
<name>ODO1_MACFA</name>
<proteinExistence type="evidence at transcript level"/>
<evidence type="ECO:0000250" key="1">
    <source>
        <dbReference type="UniProtKB" id="Q02218"/>
    </source>
</evidence>
<evidence type="ECO:0000250" key="2">
    <source>
        <dbReference type="UniProtKB" id="Q148N0"/>
    </source>
</evidence>
<evidence type="ECO:0000250" key="3">
    <source>
        <dbReference type="UniProtKB" id="Q5XI78"/>
    </source>
</evidence>
<evidence type="ECO:0000250" key="4">
    <source>
        <dbReference type="UniProtKB" id="Q60597"/>
    </source>
</evidence>
<evidence type="ECO:0000250" key="5">
    <source>
        <dbReference type="UniProtKB" id="Q96HY7"/>
    </source>
</evidence>
<evidence type="ECO:0000255" key="6"/>
<evidence type="ECO:0000305" key="7"/>
<comment type="function">
    <text evidence="1">2-oxoglutarate dehydrogenase (E1o) component of the 2-oxoglutarate dehydrogenase complex (OGDHC). Participates in the first step, rate limiting for the overall conversion of 2-oxoglutarate to succinyl-CoA and CO(2) catalyzed by the whole OGDHC. Catalyzes the irreversible decarboxylation of 2-oxoglutarate (alpha-ketoglutarate) via the thiamine diphosphate (ThDP) cofactor and subsequent transfer of the decarboxylated acyl intermediate on an oxidized dihydrolipoyl group that is covalently amidated to the E2 enzyme (dihydrolipoyllysine-residue succinyltransferase or DLST). Plays a key role in the Krebs (citric acid) cycle, which is a common pathway for oxidation of fuel molecules, including carbohydrates, fatty acids, and amino acids. Can catalyze the decarboxylation of 2-oxoadipate in vitro, but at a much lower rate than 2-oxoglutarate. Mainly active in the mitochondrion. A fraction of the 2-oxoglutarate dehydrogenase complex also localizes in the nucleus and is required for lysine succinylation of histones: associates with KAT2A on chromatin and provides succinyl-CoA to histone succinyltransferase KAT2A.</text>
</comment>
<comment type="catalytic activity">
    <reaction evidence="1">
        <text>N(6)-[(R)-lipoyl]-L-lysyl-[protein] + 2-oxoglutarate + H(+) = N(6)-[(R)-S(8)-succinyldihydrolipoyl]-L-lysyl-[protein] + CO2</text>
        <dbReference type="Rhea" id="RHEA:12188"/>
        <dbReference type="Rhea" id="RHEA-COMP:10474"/>
        <dbReference type="Rhea" id="RHEA-COMP:20092"/>
        <dbReference type="ChEBI" id="CHEBI:15378"/>
        <dbReference type="ChEBI" id="CHEBI:16526"/>
        <dbReference type="ChEBI" id="CHEBI:16810"/>
        <dbReference type="ChEBI" id="CHEBI:83099"/>
        <dbReference type="ChEBI" id="CHEBI:83120"/>
        <dbReference type="EC" id="1.2.4.2"/>
    </reaction>
    <physiologicalReaction direction="left-to-right" evidence="1">
        <dbReference type="Rhea" id="RHEA:12189"/>
    </physiologicalReaction>
</comment>
<comment type="cofactor">
    <cofactor evidence="1">
        <name>thiamine diphosphate</name>
        <dbReference type="ChEBI" id="CHEBI:58937"/>
    </cofactor>
    <cofactor evidence="1">
        <name>Mg(2+)</name>
        <dbReference type="ChEBI" id="CHEBI:18420"/>
    </cofactor>
</comment>
<comment type="activity regulation">
    <text evidence="1">Calcium ions and ADP stimulate, whereas ATP and NADH reduce catalytic activity.</text>
</comment>
<comment type="subunit">
    <text evidence="1 2">Homodimer (By similarity). The 2-oxoglutarate dehydrogenase complex is composed of OGDH (2-oxoglutarate dehydrogenase; E1), DLST (dihydrolipoamide succinyltransferase; E2), DLD (dihydrolipoamide dehydrogenase; E3) and the assembly factor KGD4 (By similarity). It contains multiple copies of the three enzymatic components (E1, E2 and E3). In the nucleus, the 2-oxoglutarate dehydrogenase complex associates with KAT2A. Interacts with ABHD11; this interaction maintains the functional lipoylation of the 2-oxoglutarate dehydrogenase complex (By similarity).</text>
</comment>
<comment type="subcellular location">
    <subcellularLocation>
        <location evidence="3">Mitochondrion</location>
    </subcellularLocation>
    <subcellularLocation>
        <location evidence="1">Nucleus</location>
    </subcellularLocation>
    <text evidence="1">Mainly localizes in the mitochondrion. A small fraction localizes to the nucleus, where the 2-oxoglutarate dehydrogenase complex is required for histone succinylation.</text>
</comment>
<comment type="miscellaneous">
    <text evidence="5">The mitochondrial 2-oxoglutarate and 2-oxoadipate dehydrogenase complexes (OGDHC and OADHC, respectively) share their E2 (DLST) and E3 (dihydrolipoyl dehydrogenase or DLD) components, but the E1 component is specific to each complex (E1o and E1a (DHTK1), respectively).</text>
</comment>
<comment type="similarity">
    <text evidence="7">Belongs to the alpha-ketoglutarate dehydrogenase family.</text>
</comment>
<sequence length="1023" mass="115909">MFHLRTCAAKLRPLTASQTVKTFSQNRPAAARTFQQIRCYSAPVAAEPFLSGTSSNYVEEMYCAWLENPKSVHKSWDIFFRNTNAGAPPGTAYQSPLPLSRGSLAAVAHAQSLVEAQPNVDKLVEDHLAVQSLIRAYQIRGHHVAQLDPLGILDADLDSSVPADIISSTDKLGFYGLDESDLDKVFHLPTTTFIGGQESALPLREIIRRLEMAYCQHIGVEFMFINDLEQCQWIRQKFETPGIMQFTNEEKRTLLARLVRSTRFEEFLQRKWSSEKRFGLEGCEVLIPALKTIIDKSSENGVDYVIMGMPHRGRLNVLANVIRKELEQIFCQFDSKLEAADEGSGDVKYHLGMYHRRINRVTDRNITLSLVANPSHLEAADPVVMGKTKAEQFYCGDTEGKKVMSILLHGDAAFAGQGIVYETFHLSDLPSYTTHGTVHVVVNNQIGFTTDPRMARSSPYPTDVARVVNAPIFHVNSDDPEAVMYVCKVAAEWRSTFHKDVVVDLVCYRRNGHNEMDEPMFTQPLMYKQIRKQKPVLQKYAELLVSQGVVNQPEYEEEISKYDKICEEAFARSKDEKILHIKHWLDSPWPGFFTLDGQPRSMSCPSTGLTEDILTHIGNVASSVPVENFTIHGGLSRILKTRGEMVKNRTVDWALAEYMAFGSLLKEGIHIRLSGQDVERGTFSHRHHVLHDQNVDKRTCIPMNHLWPNQAPYTVCNSSLSEYGVLGFELGFAMASPNALVLWEAQFGDFHNTAQCIIDQFICPGQAKWVRQNGIVLLLPHGMEGMGPEHSSARPERFLQMCNDDPDVLPDLKEANFDINQLHDCNWVVVNCSTPGNFFHVLRRQILLPFRKPLIIFTPKSLLRHPEARSSFDEMLPGTHFQRVIPEDGPAAQNPENVKRLLFCTGKVYYDLTRERKARDMVGQVAITRIEQLSPFPFDLLLKEVQKYPNAELAWCQEEHKNQGYYDYVKPRLRTTISRAKPVWYAGRDPAAAPATGNKKTHLTELQRLLDTAFDLDVFKNFS</sequence>
<accession>Q60HE2</accession>
<keyword id="KW-0007">Acetylation</keyword>
<keyword id="KW-0106">Calcium</keyword>
<keyword id="KW-0324">Glycolysis</keyword>
<keyword id="KW-1017">Isopeptide bond</keyword>
<keyword id="KW-0460">Magnesium</keyword>
<keyword id="KW-0479">Metal-binding</keyword>
<keyword id="KW-0496">Mitochondrion</keyword>
<keyword id="KW-0539">Nucleus</keyword>
<keyword id="KW-0560">Oxidoreductase</keyword>
<keyword id="KW-0597">Phosphoprotein</keyword>
<keyword id="KW-1185">Reference proteome</keyword>
<keyword id="KW-0786">Thiamine pyrophosphate</keyword>
<keyword id="KW-0809">Transit peptide</keyword>
<keyword id="KW-0832">Ubl conjugation</keyword>
<gene>
    <name evidence="1" type="primary">OGDH</name>
    <name type="ORF">QccE-15394</name>
</gene>